<proteinExistence type="inferred from homology"/>
<gene>
    <name evidence="1" type="primary">rplR</name>
    <name type="ordered locus">TM1040_0270</name>
</gene>
<comment type="function">
    <text evidence="1">This is one of the proteins that bind and probably mediate the attachment of the 5S RNA into the large ribosomal subunit, where it forms part of the central protuberance.</text>
</comment>
<comment type="subunit">
    <text evidence="1">Part of the 50S ribosomal subunit; part of the 5S rRNA/L5/L18/L25 subcomplex. Contacts the 5S and 23S rRNAs.</text>
</comment>
<comment type="similarity">
    <text evidence="1">Belongs to the universal ribosomal protein uL18 family.</text>
</comment>
<accession>Q1GK13</accession>
<evidence type="ECO:0000255" key="1">
    <source>
        <dbReference type="HAMAP-Rule" id="MF_01337"/>
    </source>
</evidence>
<evidence type="ECO:0000305" key="2"/>
<feature type="chain" id="PRO_0000251370" description="Large ribosomal subunit protein uL18">
    <location>
        <begin position="1"/>
        <end position="119"/>
    </location>
</feature>
<organism>
    <name type="scientific">Ruegeria sp. (strain TM1040)</name>
    <name type="common">Silicibacter sp.</name>
    <dbReference type="NCBI Taxonomy" id="292414"/>
    <lineage>
        <taxon>Bacteria</taxon>
        <taxon>Pseudomonadati</taxon>
        <taxon>Pseudomonadota</taxon>
        <taxon>Alphaproteobacteria</taxon>
        <taxon>Rhodobacterales</taxon>
        <taxon>Roseobacteraceae</taxon>
        <taxon>Ruegeria</taxon>
    </lineage>
</organism>
<name>RL18_RUEST</name>
<reference key="1">
    <citation type="submission" date="2006-05" db="EMBL/GenBank/DDBJ databases">
        <title>Complete sequence of chromosome of Silicibacter sp. TM1040.</title>
        <authorList>
            <consortium name="US DOE Joint Genome Institute"/>
            <person name="Copeland A."/>
            <person name="Lucas S."/>
            <person name="Lapidus A."/>
            <person name="Barry K."/>
            <person name="Detter J.C."/>
            <person name="Glavina del Rio T."/>
            <person name="Hammon N."/>
            <person name="Israni S."/>
            <person name="Dalin E."/>
            <person name="Tice H."/>
            <person name="Pitluck S."/>
            <person name="Brettin T."/>
            <person name="Bruce D."/>
            <person name="Han C."/>
            <person name="Tapia R."/>
            <person name="Goodwin L."/>
            <person name="Thompson L.S."/>
            <person name="Gilna P."/>
            <person name="Schmutz J."/>
            <person name="Larimer F."/>
            <person name="Land M."/>
            <person name="Hauser L."/>
            <person name="Kyrpides N."/>
            <person name="Kim E."/>
            <person name="Belas R."/>
            <person name="Moran M.A."/>
            <person name="Buchan A."/>
            <person name="Gonzalez J.M."/>
            <person name="Schell M.A."/>
            <person name="Sun F."/>
            <person name="Richardson P."/>
        </authorList>
    </citation>
    <scope>NUCLEOTIDE SEQUENCE [LARGE SCALE GENOMIC DNA]</scope>
    <source>
        <strain>TM1040</strain>
    </source>
</reference>
<dbReference type="EMBL" id="CP000377">
    <property type="protein sequence ID" value="ABF63003.1"/>
    <property type="molecule type" value="Genomic_DNA"/>
</dbReference>
<dbReference type="RefSeq" id="WP_005621834.1">
    <property type="nucleotide sequence ID" value="NC_008044.1"/>
</dbReference>
<dbReference type="SMR" id="Q1GK13"/>
<dbReference type="STRING" id="292414.TM1040_0270"/>
<dbReference type="GeneID" id="28248381"/>
<dbReference type="KEGG" id="sit:TM1040_0270"/>
<dbReference type="eggNOG" id="COG0256">
    <property type="taxonomic scope" value="Bacteria"/>
</dbReference>
<dbReference type="HOGENOM" id="CLU_098841_0_1_5"/>
<dbReference type="OrthoDB" id="9810939at2"/>
<dbReference type="Proteomes" id="UP000000636">
    <property type="component" value="Chromosome"/>
</dbReference>
<dbReference type="GO" id="GO:0022625">
    <property type="term" value="C:cytosolic large ribosomal subunit"/>
    <property type="evidence" value="ECO:0007669"/>
    <property type="project" value="TreeGrafter"/>
</dbReference>
<dbReference type="GO" id="GO:0008097">
    <property type="term" value="F:5S rRNA binding"/>
    <property type="evidence" value="ECO:0007669"/>
    <property type="project" value="TreeGrafter"/>
</dbReference>
<dbReference type="GO" id="GO:0003735">
    <property type="term" value="F:structural constituent of ribosome"/>
    <property type="evidence" value="ECO:0007669"/>
    <property type="project" value="InterPro"/>
</dbReference>
<dbReference type="GO" id="GO:0006412">
    <property type="term" value="P:translation"/>
    <property type="evidence" value="ECO:0007669"/>
    <property type="project" value="UniProtKB-UniRule"/>
</dbReference>
<dbReference type="CDD" id="cd00432">
    <property type="entry name" value="Ribosomal_L18_L5e"/>
    <property type="match status" value="1"/>
</dbReference>
<dbReference type="FunFam" id="3.30.420.100:FF:000001">
    <property type="entry name" value="50S ribosomal protein L18"/>
    <property type="match status" value="1"/>
</dbReference>
<dbReference type="Gene3D" id="3.30.420.100">
    <property type="match status" value="1"/>
</dbReference>
<dbReference type="HAMAP" id="MF_01337_B">
    <property type="entry name" value="Ribosomal_uL18_B"/>
    <property type="match status" value="1"/>
</dbReference>
<dbReference type="InterPro" id="IPR004389">
    <property type="entry name" value="Ribosomal_uL18_bac-type"/>
</dbReference>
<dbReference type="InterPro" id="IPR005484">
    <property type="entry name" value="Ribosomal_uL18_bac/euk"/>
</dbReference>
<dbReference type="NCBIfam" id="TIGR00060">
    <property type="entry name" value="L18_bact"/>
    <property type="match status" value="1"/>
</dbReference>
<dbReference type="PANTHER" id="PTHR12899">
    <property type="entry name" value="39S RIBOSOMAL PROTEIN L18, MITOCHONDRIAL"/>
    <property type="match status" value="1"/>
</dbReference>
<dbReference type="PANTHER" id="PTHR12899:SF3">
    <property type="entry name" value="LARGE RIBOSOMAL SUBUNIT PROTEIN UL18M"/>
    <property type="match status" value="1"/>
</dbReference>
<dbReference type="Pfam" id="PF00861">
    <property type="entry name" value="Ribosomal_L18p"/>
    <property type="match status" value="1"/>
</dbReference>
<dbReference type="SUPFAM" id="SSF53137">
    <property type="entry name" value="Translational machinery components"/>
    <property type="match status" value="1"/>
</dbReference>
<keyword id="KW-1185">Reference proteome</keyword>
<keyword id="KW-0687">Ribonucleoprotein</keyword>
<keyword id="KW-0689">Ribosomal protein</keyword>
<keyword id="KW-0694">RNA-binding</keyword>
<keyword id="KW-0699">rRNA-binding</keyword>
<sequence length="119" mass="12947">MANSKRTLFLKRRLRVRNKLRKVNAGRLRLSVHRSNKNISVQLIDDVKGVTLAAASTLEKDLGFVGKNNIEAATKVGSVIAERAKAAGVTEAYFDRGGFLYHGKVKALADAAREGGLKI</sequence>
<protein>
    <recommendedName>
        <fullName evidence="1">Large ribosomal subunit protein uL18</fullName>
    </recommendedName>
    <alternativeName>
        <fullName evidence="2">50S ribosomal protein L18</fullName>
    </alternativeName>
</protein>